<feature type="chain" id="PRO_0000436448" description="UDP-N-acetylglucosamine 1-carboxyvinyltransferase">
    <location>
        <begin position="1"/>
        <end position="419"/>
    </location>
</feature>
<feature type="active site" description="Proton donor" evidence="2">
    <location>
        <position position="116"/>
    </location>
</feature>
<feature type="binding site" evidence="1">
    <location>
        <begin position="22"/>
        <end position="23"/>
    </location>
    <ligand>
        <name>phosphoenolpyruvate</name>
        <dbReference type="ChEBI" id="CHEBI:58702"/>
    </ligand>
</feature>
<feature type="binding site" evidence="1">
    <location>
        <position position="92"/>
    </location>
    <ligand>
        <name>UDP-N-acetyl-alpha-D-glucosamine</name>
        <dbReference type="ChEBI" id="CHEBI:57705"/>
    </ligand>
</feature>
<feature type="binding site" evidence="1">
    <location>
        <begin position="121"/>
        <end position="125"/>
    </location>
    <ligand>
        <name>UDP-N-acetyl-alpha-D-glucosamine</name>
        <dbReference type="ChEBI" id="CHEBI:57705"/>
    </ligand>
</feature>
<feature type="binding site" evidence="1">
    <location>
        <position position="306"/>
    </location>
    <ligand>
        <name>UDP-N-acetyl-alpha-D-glucosamine</name>
        <dbReference type="ChEBI" id="CHEBI:57705"/>
    </ligand>
</feature>
<feature type="binding site" evidence="1">
    <location>
        <position position="328"/>
    </location>
    <ligand>
        <name>UDP-N-acetyl-alpha-D-glucosamine</name>
        <dbReference type="ChEBI" id="CHEBI:57705"/>
    </ligand>
</feature>
<feature type="modified residue" description="2-(S-cysteinyl)pyruvic acid O-phosphothioketal" evidence="2">
    <location>
        <position position="116"/>
    </location>
</feature>
<feature type="strand" evidence="9">
    <location>
        <begin position="2"/>
        <end position="8"/>
    </location>
</feature>
<feature type="strand" evidence="9">
    <location>
        <begin position="12"/>
        <end position="17"/>
    </location>
</feature>
<feature type="helix" evidence="9">
    <location>
        <begin position="22"/>
        <end position="31"/>
    </location>
</feature>
<feature type="helix" evidence="9">
    <location>
        <begin position="32"/>
        <end position="34"/>
    </location>
</feature>
<feature type="strand" evidence="9">
    <location>
        <begin position="39"/>
        <end position="43"/>
    </location>
</feature>
<feature type="helix" evidence="9">
    <location>
        <begin position="48"/>
        <end position="59"/>
    </location>
</feature>
<feature type="strand" evidence="9">
    <location>
        <begin position="63"/>
        <end position="67"/>
    </location>
</feature>
<feature type="strand" evidence="9">
    <location>
        <begin position="70"/>
        <end position="74"/>
    </location>
</feature>
<feature type="helix" evidence="9">
    <location>
        <begin position="75"/>
        <end position="77"/>
    </location>
</feature>
<feature type="helix" evidence="9">
    <location>
        <begin position="85"/>
        <end position="88"/>
    </location>
</feature>
<feature type="helix" evidence="9">
    <location>
        <begin position="96"/>
        <end position="104"/>
    </location>
</feature>
<feature type="strand" evidence="9">
    <location>
        <begin position="106"/>
        <end position="111"/>
    </location>
</feature>
<feature type="helix" evidence="9">
    <location>
        <begin position="124"/>
        <end position="132"/>
    </location>
</feature>
<feature type="strand" evidence="9">
    <location>
        <begin position="135"/>
        <end position="140"/>
    </location>
</feature>
<feature type="strand" evidence="9">
    <location>
        <begin position="143"/>
        <end position="148"/>
    </location>
</feature>
<feature type="strand" evidence="9">
    <location>
        <begin position="157"/>
        <end position="159"/>
    </location>
</feature>
<feature type="helix" evidence="9">
    <location>
        <begin position="165"/>
        <end position="175"/>
    </location>
</feature>
<feature type="strand" evidence="9">
    <location>
        <begin position="178"/>
        <end position="186"/>
    </location>
</feature>
<feature type="helix" evidence="9">
    <location>
        <begin position="191"/>
        <end position="202"/>
    </location>
</feature>
<feature type="strand" evidence="9">
    <location>
        <begin position="215"/>
        <end position="218"/>
    </location>
</feature>
<feature type="strand" evidence="9">
    <location>
        <begin position="227"/>
        <end position="229"/>
    </location>
</feature>
<feature type="helix" evidence="9">
    <location>
        <begin position="234"/>
        <end position="247"/>
    </location>
</feature>
<feature type="strand" evidence="9">
    <location>
        <begin position="248"/>
        <end position="255"/>
    </location>
</feature>
<feature type="helix" evidence="9">
    <location>
        <begin position="258"/>
        <end position="260"/>
    </location>
</feature>
<feature type="helix" evidence="9">
    <location>
        <begin position="262"/>
        <end position="271"/>
    </location>
</feature>
<feature type="strand" evidence="9">
    <location>
        <begin position="275"/>
        <end position="278"/>
    </location>
</feature>
<feature type="strand" evidence="9">
    <location>
        <begin position="281"/>
        <end position="284"/>
    </location>
</feature>
<feature type="helix" evidence="9">
    <location>
        <begin position="308"/>
        <end position="317"/>
    </location>
</feature>
<feature type="strand" evidence="9">
    <location>
        <begin position="318"/>
        <end position="325"/>
    </location>
</feature>
<feature type="helix" evidence="9">
    <location>
        <begin position="336"/>
        <end position="340"/>
    </location>
</feature>
<feature type="turn" evidence="9">
    <location>
        <begin position="341"/>
        <end position="343"/>
    </location>
</feature>
<feature type="strand" evidence="9">
    <location>
        <begin position="346"/>
        <end position="349"/>
    </location>
</feature>
<feature type="strand" evidence="9">
    <location>
        <begin position="352"/>
        <end position="357"/>
    </location>
</feature>
<feature type="strand" evidence="9">
    <location>
        <begin position="365"/>
        <end position="367"/>
    </location>
</feature>
<feature type="helix" evidence="9">
    <location>
        <begin position="371"/>
        <end position="383"/>
    </location>
</feature>
<feature type="strand" evidence="9">
    <location>
        <begin position="384"/>
        <end position="391"/>
    </location>
</feature>
<feature type="helix" evidence="9">
    <location>
        <begin position="394"/>
        <end position="399"/>
    </location>
</feature>
<feature type="helix" evidence="9">
    <location>
        <begin position="403"/>
        <end position="408"/>
    </location>
</feature>
<feature type="turn" evidence="9">
    <location>
        <begin position="409"/>
        <end position="411"/>
    </location>
</feature>
<feature type="strand" evidence="9">
    <location>
        <begin position="413"/>
        <end position="418"/>
    </location>
</feature>
<keyword id="KW-0002">3D-structure</keyword>
<keyword id="KW-0131">Cell cycle</keyword>
<keyword id="KW-0132">Cell division</keyword>
<keyword id="KW-0133">Cell shape</keyword>
<keyword id="KW-0961">Cell wall biogenesis/degradation</keyword>
<keyword id="KW-0963">Cytoplasm</keyword>
<keyword id="KW-0573">Peptidoglycan synthesis</keyword>
<keyword id="KW-0670">Pyruvate</keyword>
<keyword id="KW-1185">Reference proteome</keyword>
<keyword id="KW-0808">Transferase</keyword>
<dbReference type="EC" id="2.5.1.7" evidence="2"/>
<dbReference type="EMBL" id="CP000410">
    <property type="protein sequence ID" value="ABJ54180.1"/>
    <property type="molecule type" value="Genomic_DNA"/>
</dbReference>
<dbReference type="RefSeq" id="WP_001227083.1">
    <property type="nucleotide sequence ID" value="NZ_JAMLJR010000022.1"/>
</dbReference>
<dbReference type="PDB" id="3ZH3">
    <property type="method" value="X-ray"/>
    <property type="resolution" value="2.90 A"/>
    <property type="chains" value="A=1-419"/>
</dbReference>
<dbReference type="PDBsum" id="3ZH3"/>
<dbReference type="SMR" id="A0A0H2ZNL3"/>
<dbReference type="PaxDb" id="373153-SPD_0967"/>
<dbReference type="KEGG" id="spd:SPD_0967"/>
<dbReference type="eggNOG" id="COG0766">
    <property type="taxonomic scope" value="Bacteria"/>
</dbReference>
<dbReference type="HOGENOM" id="CLU_027387_0_0_9"/>
<dbReference type="BioCyc" id="SPNE373153:G1G6V-1059-MONOMER"/>
<dbReference type="UniPathway" id="UPA00219"/>
<dbReference type="EvolutionaryTrace" id="A0A0H2ZNL3"/>
<dbReference type="Proteomes" id="UP000001452">
    <property type="component" value="Chromosome"/>
</dbReference>
<dbReference type="GO" id="GO:0005829">
    <property type="term" value="C:cytosol"/>
    <property type="evidence" value="ECO:0000250"/>
    <property type="project" value="UniProtKB"/>
</dbReference>
<dbReference type="GO" id="GO:0008760">
    <property type="term" value="F:UDP-N-acetylglucosamine 1-carboxyvinyltransferase activity"/>
    <property type="evidence" value="ECO:0000250"/>
    <property type="project" value="UniProtKB"/>
</dbReference>
<dbReference type="GO" id="GO:0051301">
    <property type="term" value="P:cell division"/>
    <property type="evidence" value="ECO:0007669"/>
    <property type="project" value="UniProtKB-KW"/>
</dbReference>
<dbReference type="GO" id="GO:0071555">
    <property type="term" value="P:cell wall organization"/>
    <property type="evidence" value="ECO:0007669"/>
    <property type="project" value="UniProtKB-KW"/>
</dbReference>
<dbReference type="GO" id="GO:0071236">
    <property type="term" value="P:cellular response to antibiotic"/>
    <property type="evidence" value="ECO:0000315"/>
    <property type="project" value="UniProtKB"/>
</dbReference>
<dbReference type="GO" id="GO:0009252">
    <property type="term" value="P:peptidoglycan biosynthetic process"/>
    <property type="evidence" value="ECO:0000250"/>
    <property type="project" value="UniProtKB"/>
</dbReference>
<dbReference type="GO" id="GO:0008360">
    <property type="term" value="P:regulation of cell shape"/>
    <property type="evidence" value="ECO:0007669"/>
    <property type="project" value="UniProtKB-KW"/>
</dbReference>
<dbReference type="GO" id="GO:0019277">
    <property type="term" value="P:UDP-N-acetylgalactosamine biosynthetic process"/>
    <property type="evidence" value="ECO:0007669"/>
    <property type="project" value="InterPro"/>
</dbReference>
<dbReference type="CDD" id="cd01555">
    <property type="entry name" value="UdpNAET"/>
    <property type="match status" value="1"/>
</dbReference>
<dbReference type="FunFam" id="3.65.10.10:FF:000001">
    <property type="entry name" value="UDP-N-acetylglucosamine 1-carboxyvinyltransferase"/>
    <property type="match status" value="1"/>
</dbReference>
<dbReference type="Gene3D" id="3.65.10.10">
    <property type="entry name" value="Enolpyruvate transferase domain"/>
    <property type="match status" value="2"/>
</dbReference>
<dbReference type="HAMAP" id="MF_00111">
    <property type="entry name" value="MurA"/>
    <property type="match status" value="1"/>
</dbReference>
<dbReference type="InterPro" id="IPR001986">
    <property type="entry name" value="Enolpyruvate_Tfrase_dom"/>
</dbReference>
<dbReference type="InterPro" id="IPR036968">
    <property type="entry name" value="Enolpyruvate_Tfrase_sf"/>
</dbReference>
<dbReference type="InterPro" id="IPR050068">
    <property type="entry name" value="MurA_subfamily"/>
</dbReference>
<dbReference type="InterPro" id="IPR013792">
    <property type="entry name" value="RNA3'P_cycl/enolpyr_Trfase_a/b"/>
</dbReference>
<dbReference type="InterPro" id="IPR005750">
    <property type="entry name" value="UDP_GlcNAc_COvinyl_MurA"/>
</dbReference>
<dbReference type="NCBIfam" id="TIGR01072">
    <property type="entry name" value="murA"/>
    <property type="match status" value="1"/>
</dbReference>
<dbReference type="NCBIfam" id="NF006873">
    <property type="entry name" value="PRK09369.1"/>
    <property type="match status" value="1"/>
</dbReference>
<dbReference type="NCBIfam" id="NF009470">
    <property type="entry name" value="PRK12830.1"/>
    <property type="match status" value="1"/>
</dbReference>
<dbReference type="PANTHER" id="PTHR43783">
    <property type="entry name" value="UDP-N-ACETYLGLUCOSAMINE 1-CARBOXYVINYLTRANSFERASE"/>
    <property type="match status" value="1"/>
</dbReference>
<dbReference type="PANTHER" id="PTHR43783:SF2">
    <property type="entry name" value="UDP-N-ACETYLGLUCOSAMINE 1-CARBOXYVINYLTRANSFERASE 2"/>
    <property type="match status" value="1"/>
</dbReference>
<dbReference type="Pfam" id="PF00275">
    <property type="entry name" value="EPSP_synthase"/>
    <property type="match status" value="1"/>
</dbReference>
<dbReference type="SUPFAM" id="SSF55205">
    <property type="entry name" value="EPT/RTPC-like"/>
    <property type="match status" value="1"/>
</dbReference>
<gene>
    <name evidence="4 6" type="primary">murA1</name>
    <name evidence="2" type="synonym">murA</name>
    <name evidence="6" type="ordered locus">SPD_0967</name>
</gene>
<accession>A0A0H2ZNL3</accession>
<evidence type="ECO:0000250" key="1">
    <source>
        <dbReference type="UniProtKB" id="P0A749"/>
    </source>
</evidence>
<evidence type="ECO:0000255" key="2">
    <source>
        <dbReference type="HAMAP-Rule" id="MF_00111"/>
    </source>
</evidence>
<evidence type="ECO:0000269" key="3">
    <source>
    </source>
</evidence>
<evidence type="ECO:0000303" key="4">
    <source>
    </source>
</evidence>
<evidence type="ECO:0000305" key="5"/>
<evidence type="ECO:0000312" key="6">
    <source>
        <dbReference type="EMBL" id="ABJ54180.1"/>
    </source>
</evidence>
<evidence type="ECO:0000312" key="7">
    <source>
        <dbReference type="Proteomes" id="UP000001452"/>
    </source>
</evidence>
<evidence type="ECO:0007744" key="8">
    <source>
        <dbReference type="PDB" id="3ZH3"/>
    </source>
</evidence>
<evidence type="ECO:0007829" key="9">
    <source>
        <dbReference type="PDB" id="3ZH3"/>
    </source>
</evidence>
<organism evidence="6">
    <name type="scientific">Streptococcus pneumoniae serotype 2 (strain D39 / NCTC 7466)</name>
    <dbReference type="NCBI Taxonomy" id="373153"/>
    <lineage>
        <taxon>Bacteria</taxon>
        <taxon>Bacillati</taxon>
        <taxon>Bacillota</taxon>
        <taxon>Bacilli</taxon>
        <taxon>Lactobacillales</taxon>
        <taxon>Streptococcaceae</taxon>
        <taxon>Streptococcus</taxon>
    </lineage>
</organism>
<sequence>MRKIVINGGLPLQGEITISGAKNSVVALIPAIILADDVVTLDCVPDISDVASLVEIMELMGATVKRYDDVLEIDPRGVQNIPMPYGKINSLRASYYFYGSLLGRFGEATVGLPGGCDLGPRPIDLHLKAFEAMGATASYEGDNMKLSAKDTGLHGASIYMDTVSVGATINTMIAAVKANGRTIIENAAREPEIIDVATLLNNMGAHIRGAGTNIIIIDGVERLHGTRHQVIPDRIEAGTYISLAAAVGKGIRINNVLYEHLEGFIAKLEEMGVRMTVSEDSIFVEEQSNLKAINIKTAPYPGFATDLQQPLTPLLLRANGRGTIVDTIYEKRVNHVFELAKMDADISTTNGHILYTGGRDLRGASVKATDLRAGAALVIAGLMAEGKTEITNIEFILRGYSDIIEKLRNLGADIRLVED</sequence>
<proteinExistence type="evidence at protein level"/>
<name>MURA1_STRP2</name>
<comment type="function">
    <text evidence="2 3">Cell wall formation. Adds enolpyruvyl to UDP-N-acetylglucosamine (By similarity). Target for the antibiotic fosfomycin. Involved in heteroresistance to antibiotic fosfomycin. Heteroresistance is the ability of a clonal population to grow one or several subpopulations at a frequency of 10(-7) to 10(-3) in the presence of a higher antibiotic concentration than that predicted to be effective by measurement of the minimum inhibitory concentration (MIC) (PubMed:23571543).</text>
</comment>
<comment type="catalytic activity">
    <reaction evidence="2">
        <text>phosphoenolpyruvate + UDP-N-acetyl-alpha-D-glucosamine = UDP-N-acetyl-3-O-(1-carboxyvinyl)-alpha-D-glucosamine + phosphate</text>
        <dbReference type="Rhea" id="RHEA:18681"/>
        <dbReference type="ChEBI" id="CHEBI:43474"/>
        <dbReference type="ChEBI" id="CHEBI:57705"/>
        <dbReference type="ChEBI" id="CHEBI:58702"/>
        <dbReference type="ChEBI" id="CHEBI:68483"/>
        <dbReference type="EC" id="2.5.1.7"/>
    </reaction>
</comment>
<comment type="pathway">
    <text evidence="2">Cell wall biogenesis; peptidoglycan biosynthesis.</text>
</comment>
<comment type="subcellular location">
    <subcellularLocation>
        <location evidence="2">Cytoplasm</location>
    </subcellularLocation>
</comment>
<comment type="disruption phenotype">
    <text evidence="3">No heteroresistance to fosfomycin.</text>
</comment>
<comment type="similarity">
    <text evidence="2">Belongs to the EPSP synthase family. MurA subfamily.</text>
</comment>
<protein>
    <recommendedName>
        <fullName evidence="2">UDP-N-acetylglucosamine 1-carboxyvinyltransferase</fullName>
        <ecNumber evidence="2">2.5.1.7</ecNumber>
    </recommendedName>
    <alternativeName>
        <fullName evidence="2">Enoylpyruvate transferase</fullName>
        <shortName evidence="5">EPT</shortName>
    </alternativeName>
    <alternativeName>
        <fullName evidence="2 4">UDP-N-acetylglucosamine enolpyruvyl transferase</fullName>
    </alternativeName>
</protein>
<reference evidence="6 7" key="1">
    <citation type="journal article" date="2007" name="J. Bacteriol.">
        <title>Genome sequence of Avery's virulent serotype 2 strain D39 of Streptococcus pneumoniae and comparison with that of unencapsulated laboratory strain R6.</title>
        <authorList>
            <person name="Lanie J.A."/>
            <person name="Ng W.-L."/>
            <person name="Kazmierczak K.M."/>
            <person name="Andrzejewski T.M."/>
            <person name="Davidsen T.M."/>
            <person name="Wayne K.J."/>
            <person name="Tettelin H."/>
            <person name="Glass J.I."/>
            <person name="Winkler M.E."/>
        </authorList>
    </citation>
    <scope>NUCLEOTIDE SEQUENCE [LARGE SCALE GENOMIC DNA]</scope>
    <source>
        <strain evidence="7">D39 / NCTC 7466</strain>
    </source>
</reference>
<reference evidence="8" key="2">
    <citation type="journal article" date="2013" name="Antimicrob. Agents Chemother.">
        <title>Heteroresistance to fosfomycin is predominant in Streptococcus pneumoniae and depends on the murA1 gene.</title>
        <authorList>
            <person name="Engel H."/>
            <person name="Gutierrez-Fernandez J."/>
            <person name="Fluckiger C."/>
            <person name="Martinez-Ripoll M."/>
            <person name="Muhlemann K."/>
            <person name="Hermoso J.A."/>
            <person name="Hilty M."/>
            <person name="Hathaway L.J."/>
        </authorList>
    </citation>
    <scope>X-RAY CRYSTALLOGRAPHY (2.90 ANGSTROMS)</scope>
    <scope>FUNCTION</scope>
    <scope>DISRUPTION PHENOTYPE</scope>
    <source>
        <strain evidence="4">D39 / NCTC 7466</strain>
    </source>
</reference>